<keyword id="KW-0249">Electron transport</keyword>
<keyword id="KW-0408">Iron</keyword>
<keyword id="KW-0411">Iron-sulfur</keyword>
<keyword id="KW-0479">Metal-binding</keyword>
<keyword id="KW-0535">Nitrogen fixation</keyword>
<keyword id="KW-0614">Plasmid</keyword>
<keyword id="KW-1185">Reference proteome</keyword>
<keyword id="KW-0813">Transport</keyword>
<dbReference type="EMBL" id="Z68203">
    <property type="protein sequence ID" value="CAA92414.1"/>
    <property type="molecule type" value="Genomic_DNA"/>
</dbReference>
<dbReference type="EMBL" id="U00090">
    <property type="protein sequence ID" value="AAB91887.1"/>
    <property type="molecule type" value="Genomic_DNA"/>
</dbReference>
<dbReference type="RefSeq" id="NP_444100.1">
    <property type="nucleotide sequence ID" value="NC_000914.2"/>
</dbReference>
<dbReference type="RefSeq" id="WP_010875163.1">
    <property type="nucleotide sequence ID" value="NC_000914.2"/>
</dbReference>
<dbReference type="SMR" id="Q53207"/>
<dbReference type="KEGG" id="rhi:NGR_a01250"/>
<dbReference type="PATRIC" id="fig|394.7.peg.109"/>
<dbReference type="eggNOG" id="COG2440">
    <property type="taxonomic scope" value="Bacteria"/>
</dbReference>
<dbReference type="HOGENOM" id="CLU_163428_0_0_5"/>
<dbReference type="OrthoDB" id="9800260at2"/>
<dbReference type="Proteomes" id="UP000001054">
    <property type="component" value="Plasmid pNGR234a"/>
</dbReference>
<dbReference type="GO" id="GO:0005506">
    <property type="term" value="F:iron ion binding"/>
    <property type="evidence" value="ECO:0007669"/>
    <property type="project" value="InterPro"/>
</dbReference>
<dbReference type="GO" id="GO:0051536">
    <property type="term" value="F:iron-sulfur cluster binding"/>
    <property type="evidence" value="ECO:0007669"/>
    <property type="project" value="UniProtKB-KW"/>
</dbReference>
<dbReference type="GO" id="GO:0009399">
    <property type="term" value="P:nitrogen fixation"/>
    <property type="evidence" value="ECO:0007669"/>
    <property type="project" value="UniProtKB-KW"/>
</dbReference>
<dbReference type="Gene3D" id="3.30.70.20">
    <property type="match status" value="1"/>
</dbReference>
<dbReference type="InterPro" id="IPR017896">
    <property type="entry name" value="4Fe4S_Fe-S-bd"/>
</dbReference>
<dbReference type="InterPro" id="IPR017900">
    <property type="entry name" value="4Fe4S_Fe_S_CS"/>
</dbReference>
<dbReference type="InterPro" id="IPR007859">
    <property type="entry name" value="ETF-QO/FixX_C"/>
</dbReference>
<dbReference type="InterPro" id="IPR012206">
    <property type="entry name" value="Fd_FixX"/>
</dbReference>
<dbReference type="PANTHER" id="PTHR43082">
    <property type="entry name" value="FERREDOXIN-LIKE"/>
    <property type="match status" value="1"/>
</dbReference>
<dbReference type="PANTHER" id="PTHR43082:SF3">
    <property type="entry name" value="FERREDOXIN-LIKE PROTEIN YDIT"/>
    <property type="match status" value="1"/>
</dbReference>
<dbReference type="Pfam" id="PF05187">
    <property type="entry name" value="Fer4_ETF_QO"/>
    <property type="match status" value="1"/>
</dbReference>
<dbReference type="PIRSF" id="PIRSF036548">
    <property type="entry name" value="Fdx_FixX"/>
    <property type="match status" value="1"/>
</dbReference>
<dbReference type="SUPFAM" id="SSF54862">
    <property type="entry name" value="4Fe-4S ferredoxins"/>
    <property type="match status" value="1"/>
</dbReference>
<dbReference type="PROSITE" id="PS00198">
    <property type="entry name" value="4FE4S_FER_1"/>
    <property type="match status" value="1"/>
</dbReference>
<dbReference type="PROSITE" id="PS51379">
    <property type="entry name" value="4FE4S_FER_2"/>
    <property type="match status" value="1"/>
</dbReference>
<comment type="function">
    <text>Could be a 3Fe-4S cluster-containing protein.</text>
</comment>
<comment type="similarity">
    <text evidence="2">To ferredoxins from P.putida and C.tartarivorum, ferredoxin I from A.vinelandii, ferredoxin II from D.desulfuricans.</text>
</comment>
<geneLocation type="plasmid">
    <name>sym pNGR234a</name>
</geneLocation>
<proteinExistence type="predicted"/>
<reference key="1">
    <citation type="journal article" date="1996" name="Genome Res.">
        <title>Sequencing the 500-kb GC-rich symbiotic replicon of Rhizobium sp. NGR234 using dye terminators and a thermostable 'sequenase': a beginning.</title>
        <authorList>
            <person name="Freiberg C."/>
            <person name="Perret X."/>
            <person name="Broughton W.J."/>
            <person name="Rosenthal A."/>
        </authorList>
    </citation>
    <scope>NUCLEOTIDE SEQUENCE [GENOMIC DNA]</scope>
</reference>
<reference key="2">
    <citation type="journal article" date="1997" name="Nature">
        <title>Molecular basis of symbiosis between Rhizobium and legumes.</title>
        <authorList>
            <person name="Freiberg C.A."/>
            <person name="Fellay R."/>
            <person name="Bairoch A."/>
            <person name="Broughton W.J."/>
            <person name="Rosenthal A."/>
            <person name="Perret X."/>
        </authorList>
    </citation>
    <scope>NUCLEOTIDE SEQUENCE [LARGE SCALE GENOMIC DNA]</scope>
    <source>
        <strain>NBRC 101917 / NGR234</strain>
    </source>
</reference>
<reference key="3">
    <citation type="journal article" date="2009" name="Appl. Environ. Microbiol.">
        <title>Rhizobium sp. strain NGR234 possesses a remarkable number of secretion systems.</title>
        <authorList>
            <person name="Schmeisser C."/>
            <person name="Liesegang H."/>
            <person name="Krysciak D."/>
            <person name="Bakkou N."/>
            <person name="Le Quere A."/>
            <person name="Wollherr A."/>
            <person name="Heinemeyer I."/>
            <person name="Morgenstern B."/>
            <person name="Pommerening-Roeser A."/>
            <person name="Flores M."/>
            <person name="Palacios R."/>
            <person name="Brenner S."/>
            <person name="Gottschalk G."/>
            <person name="Schmitz R.A."/>
            <person name="Broughton W.J."/>
            <person name="Perret X."/>
            <person name="Strittmatter A.W."/>
            <person name="Streit W.R."/>
        </authorList>
    </citation>
    <scope>NUCLEOTIDE SEQUENCE [LARGE SCALE GENOMIC DNA]</scope>
    <source>
        <strain>NBRC 101917 / NGR234</strain>
    </source>
</reference>
<organism>
    <name type="scientific">Sinorhizobium fredii (strain NBRC 101917 / NGR234)</name>
    <dbReference type="NCBI Taxonomy" id="394"/>
    <lineage>
        <taxon>Bacteria</taxon>
        <taxon>Pseudomonadati</taxon>
        <taxon>Pseudomonadota</taxon>
        <taxon>Alphaproteobacteria</taxon>
        <taxon>Hyphomicrobiales</taxon>
        <taxon>Rhizobiaceae</taxon>
        <taxon>Sinorhizobium/Ensifer group</taxon>
        <taxon>Sinorhizobium</taxon>
    </lineage>
</organism>
<protein>
    <recommendedName>
        <fullName>Ferredoxin-like protein</fullName>
    </recommendedName>
</protein>
<accession>Q53207</accession>
<evidence type="ECO:0000255" key="1">
    <source>
        <dbReference type="PROSITE-ProRule" id="PRU00711"/>
    </source>
</evidence>
<evidence type="ECO:0000305" key="2"/>
<name>FIXX_SINFN</name>
<feature type="chain" id="PRO_0000159211" description="Ferredoxin-like protein">
    <location>
        <begin position="1"/>
        <end position="97"/>
    </location>
</feature>
<feature type="domain" description="4Fe-4S ferredoxin-type" evidence="1">
    <location>
        <begin position="56"/>
        <end position="86"/>
    </location>
</feature>
<gene>
    <name type="primary">fixX</name>
    <name type="ordered locus">NGR_a01250</name>
    <name type="ORF">y4uO</name>
</gene>
<sequence>MTASVVRIEDKLYQNRYLVDAGRPHIKVRQHQSPSPNLLALTVVCPAKCYEVNEDGQVEVIADGCMECGTCRVLCEESGDIDWSYPRGGFGVLFKFG</sequence>